<dbReference type="EC" id="3.5.1.5" evidence="1"/>
<dbReference type="EMBL" id="AM747720">
    <property type="protein sequence ID" value="CAR53428.1"/>
    <property type="molecule type" value="Genomic_DNA"/>
</dbReference>
<dbReference type="RefSeq" id="WP_006491064.1">
    <property type="nucleotide sequence ID" value="NC_011000.1"/>
</dbReference>
<dbReference type="SMR" id="B4ECC5"/>
<dbReference type="KEGG" id="bcj:BCAL3104"/>
<dbReference type="eggNOG" id="COG0831">
    <property type="taxonomic scope" value="Bacteria"/>
</dbReference>
<dbReference type="HOGENOM" id="CLU_145825_1_0_4"/>
<dbReference type="BioCyc" id="BCEN216591:G1G1V-3444-MONOMER"/>
<dbReference type="UniPathway" id="UPA00258">
    <property type="reaction ID" value="UER00370"/>
</dbReference>
<dbReference type="Proteomes" id="UP000001035">
    <property type="component" value="Chromosome 1"/>
</dbReference>
<dbReference type="GO" id="GO:0005737">
    <property type="term" value="C:cytoplasm"/>
    <property type="evidence" value="ECO:0007669"/>
    <property type="project" value="UniProtKB-SubCell"/>
</dbReference>
<dbReference type="GO" id="GO:0016151">
    <property type="term" value="F:nickel cation binding"/>
    <property type="evidence" value="ECO:0007669"/>
    <property type="project" value="InterPro"/>
</dbReference>
<dbReference type="GO" id="GO:0009039">
    <property type="term" value="F:urease activity"/>
    <property type="evidence" value="ECO:0007669"/>
    <property type="project" value="UniProtKB-UniRule"/>
</dbReference>
<dbReference type="GO" id="GO:0043419">
    <property type="term" value="P:urea catabolic process"/>
    <property type="evidence" value="ECO:0007669"/>
    <property type="project" value="UniProtKB-UniRule"/>
</dbReference>
<dbReference type="CDD" id="cd00390">
    <property type="entry name" value="Urease_gamma"/>
    <property type="match status" value="1"/>
</dbReference>
<dbReference type="Gene3D" id="3.30.280.10">
    <property type="entry name" value="Urease, gamma-like subunit"/>
    <property type="match status" value="1"/>
</dbReference>
<dbReference type="HAMAP" id="MF_00739">
    <property type="entry name" value="Urease_gamma"/>
    <property type="match status" value="1"/>
</dbReference>
<dbReference type="InterPro" id="IPR012010">
    <property type="entry name" value="Urease_gamma"/>
</dbReference>
<dbReference type="InterPro" id="IPR002026">
    <property type="entry name" value="Urease_gamma/gamma-beta_su"/>
</dbReference>
<dbReference type="InterPro" id="IPR036463">
    <property type="entry name" value="Urease_gamma_sf"/>
</dbReference>
<dbReference type="InterPro" id="IPR050069">
    <property type="entry name" value="Urease_subunit"/>
</dbReference>
<dbReference type="NCBIfam" id="NF009712">
    <property type="entry name" value="PRK13241.1"/>
    <property type="match status" value="1"/>
</dbReference>
<dbReference type="NCBIfam" id="TIGR00193">
    <property type="entry name" value="urease_gam"/>
    <property type="match status" value="1"/>
</dbReference>
<dbReference type="PANTHER" id="PTHR33569">
    <property type="entry name" value="UREASE"/>
    <property type="match status" value="1"/>
</dbReference>
<dbReference type="PANTHER" id="PTHR33569:SF1">
    <property type="entry name" value="UREASE"/>
    <property type="match status" value="1"/>
</dbReference>
<dbReference type="Pfam" id="PF00547">
    <property type="entry name" value="Urease_gamma"/>
    <property type="match status" value="1"/>
</dbReference>
<dbReference type="PIRSF" id="PIRSF001223">
    <property type="entry name" value="Urease_gamma"/>
    <property type="match status" value="1"/>
</dbReference>
<dbReference type="SUPFAM" id="SSF54111">
    <property type="entry name" value="Urease, gamma-subunit"/>
    <property type="match status" value="1"/>
</dbReference>
<organism>
    <name type="scientific">Burkholderia cenocepacia (strain ATCC BAA-245 / DSM 16553 / LMG 16656 / NCTC 13227 / J2315 / CF5610)</name>
    <name type="common">Burkholderia cepacia (strain J2315)</name>
    <dbReference type="NCBI Taxonomy" id="216591"/>
    <lineage>
        <taxon>Bacteria</taxon>
        <taxon>Pseudomonadati</taxon>
        <taxon>Pseudomonadota</taxon>
        <taxon>Betaproteobacteria</taxon>
        <taxon>Burkholderiales</taxon>
        <taxon>Burkholderiaceae</taxon>
        <taxon>Burkholderia</taxon>
        <taxon>Burkholderia cepacia complex</taxon>
    </lineage>
</organism>
<feature type="chain" id="PRO_1000199854" description="Urease subunit gamma">
    <location>
        <begin position="1"/>
        <end position="100"/>
    </location>
</feature>
<reference key="1">
    <citation type="journal article" date="2009" name="J. Bacteriol.">
        <title>The genome of Burkholderia cenocepacia J2315, an epidemic pathogen of cystic fibrosis patients.</title>
        <authorList>
            <person name="Holden M.T."/>
            <person name="Seth-Smith H.M."/>
            <person name="Crossman L.C."/>
            <person name="Sebaihia M."/>
            <person name="Bentley S.D."/>
            <person name="Cerdeno-Tarraga A.M."/>
            <person name="Thomson N.R."/>
            <person name="Bason N."/>
            <person name="Quail M.A."/>
            <person name="Sharp S."/>
            <person name="Cherevach I."/>
            <person name="Churcher C."/>
            <person name="Goodhead I."/>
            <person name="Hauser H."/>
            <person name="Holroyd N."/>
            <person name="Mungall K."/>
            <person name="Scott P."/>
            <person name="Walker D."/>
            <person name="White B."/>
            <person name="Rose H."/>
            <person name="Iversen P."/>
            <person name="Mil-Homens D."/>
            <person name="Rocha E.P."/>
            <person name="Fialho A.M."/>
            <person name="Baldwin A."/>
            <person name="Dowson C."/>
            <person name="Barrell B.G."/>
            <person name="Govan J.R."/>
            <person name="Vandamme P."/>
            <person name="Hart C.A."/>
            <person name="Mahenthiralingam E."/>
            <person name="Parkhill J."/>
        </authorList>
    </citation>
    <scope>NUCLEOTIDE SEQUENCE [LARGE SCALE GENOMIC DNA]</scope>
    <source>
        <strain>ATCC BAA-245 / DSM 16553 / LMG 16656 / NCTC 13227 / J2315 / CF5610</strain>
    </source>
</reference>
<gene>
    <name evidence="1" type="primary">ureA</name>
    <name type="ordered locus">BceJ2315_30510</name>
    <name type="ORF">BCAL3104</name>
</gene>
<name>URE3_BURCJ</name>
<protein>
    <recommendedName>
        <fullName evidence="1">Urease subunit gamma</fullName>
        <ecNumber evidence="1">3.5.1.5</ecNumber>
    </recommendedName>
    <alternativeName>
        <fullName evidence="1">Urea amidohydrolase subunit gamma</fullName>
    </alternativeName>
</protein>
<accession>B4ECC5</accession>
<proteinExistence type="inferred from homology"/>
<evidence type="ECO:0000255" key="1">
    <source>
        <dbReference type="HAMAP-Rule" id="MF_00739"/>
    </source>
</evidence>
<comment type="catalytic activity">
    <reaction evidence="1">
        <text>urea + 2 H2O + H(+) = hydrogencarbonate + 2 NH4(+)</text>
        <dbReference type="Rhea" id="RHEA:20557"/>
        <dbReference type="ChEBI" id="CHEBI:15377"/>
        <dbReference type="ChEBI" id="CHEBI:15378"/>
        <dbReference type="ChEBI" id="CHEBI:16199"/>
        <dbReference type="ChEBI" id="CHEBI:17544"/>
        <dbReference type="ChEBI" id="CHEBI:28938"/>
        <dbReference type="EC" id="3.5.1.5"/>
    </reaction>
</comment>
<comment type="pathway">
    <text evidence="1">Nitrogen metabolism; urea degradation; CO(2) and NH(3) from urea (urease route): step 1/1.</text>
</comment>
<comment type="subunit">
    <text evidence="1">Heterotrimer of UreA (gamma), UreB (beta) and UreC (alpha) subunits. Three heterotrimers associate to form the active enzyme.</text>
</comment>
<comment type="subcellular location">
    <subcellularLocation>
        <location evidence="1">Cytoplasm</location>
    </subcellularLocation>
</comment>
<comment type="similarity">
    <text evidence="1">Belongs to the urease gamma subunit family.</text>
</comment>
<keyword id="KW-0963">Cytoplasm</keyword>
<keyword id="KW-0378">Hydrolase</keyword>
<sequence>MKLTPREKDKLLIFTAALLAERRRARGLKLNYPEAVAFITAALMEAARDGRTVAEVMHYGTTLLTRDDVMDGVPEMIPDIQVEATFPDGTKLVTVHHPIP</sequence>